<comment type="function">
    <text evidence="1">Catalyzes the condensation of ATP and 5-phosphoribose 1-diphosphate to form N'-(5'-phosphoribosyl)-ATP (PR-ATP). Has a crucial role in the pathway because the rate of histidine biosynthesis seems to be controlled primarily by regulation of HisG enzymatic activity.</text>
</comment>
<comment type="catalytic activity">
    <reaction evidence="1">
        <text>1-(5-phospho-beta-D-ribosyl)-ATP + diphosphate = 5-phospho-alpha-D-ribose 1-diphosphate + ATP</text>
        <dbReference type="Rhea" id="RHEA:18473"/>
        <dbReference type="ChEBI" id="CHEBI:30616"/>
        <dbReference type="ChEBI" id="CHEBI:33019"/>
        <dbReference type="ChEBI" id="CHEBI:58017"/>
        <dbReference type="ChEBI" id="CHEBI:73183"/>
        <dbReference type="EC" id="2.4.2.17"/>
    </reaction>
</comment>
<comment type="cofactor">
    <cofactor evidence="1">
        <name>Mg(2+)</name>
        <dbReference type="ChEBI" id="CHEBI:18420"/>
    </cofactor>
</comment>
<comment type="activity regulation">
    <text evidence="1">Feedback inhibited by histidine.</text>
</comment>
<comment type="pathway">
    <text evidence="1">Amino-acid biosynthesis; L-histidine biosynthesis; L-histidine from 5-phospho-alpha-D-ribose 1-diphosphate: step 1/9.</text>
</comment>
<comment type="subcellular location">
    <subcellularLocation>
        <location evidence="1">Cytoplasm</location>
    </subcellularLocation>
</comment>
<comment type="similarity">
    <text evidence="1">Belongs to the ATP phosphoribosyltransferase family. Long subfamily.</text>
</comment>
<evidence type="ECO:0000255" key="1">
    <source>
        <dbReference type="HAMAP-Rule" id="MF_00079"/>
    </source>
</evidence>
<organism>
    <name type="scientific">Shewanella pealeana (strain ATCC 700345 / ANG-SQ1)</name>
    <dbReference type="NCBI Taxonomy" id="398579"/>
    <lineage>
        <taxon>Bacteria</taxon>
        <taxon>Pseudomonadati</taxon>
        <taxon>Pseudomonadota</taxon>
        <taxon>Gammaproteobacteria</taxon>
        <taxon>Alteromonadales</taxon>
        <taxon>Shewanellaceae</taxon>
        <taxon>Shewanella</taxon>
    </lineage>
</organism>
<accession>A8H5D9</accession>
<sequence>MSESTRLRIAIQKSGRLSKESQKLLKSCGVKFNVNEQRLIAHSDNMPIDLLRVRDDDIPGLVMDGVVDLGIIGENVLEEEQIERQSLGKPAECVKLRELDFGACRLSLAVPNEFEYQDASSLEGLRIATSYPNLLRRYMQEQGINYRDCMLKGSVEVAPRAGLSDGICDLVSTGATLEANGLYETEVIYRSMACIIQSTQSQPDDKQALINKILSRINGVVRAKESKYILLHAPTETLEQIVALLPGAENPTVLPLNDDTNRVAIHAVSTEDLFWDTMEQLTQLGASSILVMPIEKMMG</sequence>
<reference key="1">
    <citation type="submission" date="2007-10" db="EMBL/GenBank/DDBJ databases">
        <title>Complete sequence of Shewanella pealeana ATCC 700345.</title>
        <authorList>
            <consortium name="US DOE Joint Genome Institute"/>
            <person name="Copeland A."/>
            <person name="Lucas S."/>
            <person name="Lapidus A."/>
            <person name="Barry K."/>
            <person name="Glavina del Rio T."/>
            <person name="Dalin E."/>
            <person name="Tice H."/>
            <person name="Pitluck S."/>
            <person name="Chertkov O."/>
            <person name="Brettin T."/>
            <person name="Bruce D."/>
            <person name="Detter J.C."/>
            <person name="Han C."/>
            <person name="Schmutz J."/>
            <person name="Larimer F."/>
            <person name="Land M."/>
            <person name="Hauser L."/>
            <person name="Kyrpides N."/>
            <person name="Kim E."/>
            <person name="Zhao J.-S.Z."/>
            <person name="Manno D."/>
            <person name="Hawari J."/>
            <person name="Richardson P."/>
        </authorList>
    </citation>
    <scope>NUCLEOTIDE SEQUENCE [LARGE SCALE GENOMIC DNA]</scope>
    <source>
        <strain>ATCC 700345 / ANG-SQ1</strain>
    </source>
</reference>
<dbReference type="EC" id="2.4.2.17" evidence="1"/>
<dbReference type="EMBL" id="CP000851">
    <property type="protein sequence ID" value="ABV87776.1"/>
    <property type="molecule type" value="Genomic_DNA"/>
</dbReference>
<dbReference type="RefSeq" id="WP_012155688.1">
    <property type="nucleotide sequence ID" value="NC_009901.1"/>
</dbReference>
<dbReference type="SMR" id="A8H5D9"/>
<dbReference type="STRING" id="398579.Spea_2456"/>
<dbReference type="KEGG" id="spl:Spea_2456"/>
<dbReference type="eggNOG" id="COG0040">
    <property type="taxonomic scope" value="Bacteria"/>
</dbReference>
<dbReference type="HOGENOM" id="CLU_038115_1_0_6"/>
<dbReference type="OrthoDB" id="9801867at2"/>
<dbReference type="UniPathway" id="UPA00031">
    <property type="reaction ID" value="UER00006"/>
</dbReference>
<dbReference type="Proteomes" id="UP000002608">
    <property type="component" value="Chromosome"/>
</dbReference>
<dbReference type="GO" id="GO:0005737">
    <property type="term" value="C:cytoplasm"/>
    <property type="evidence" value="ECO:0007669"/>
    <property type="project" value="UniProtKB-SubCell"/>
</dbReference>
<dbReference type="GO" id="GO:0005524">
    <property type="term" value="F:ATP binding"/>
    <property type="evidence" value="ECO:0007669"/>
    <property type="project" value="UniProtKB-KW"/>
</dbReference>
<dbReference type="GO" id="GO:0003879">
    <property type="term" value="F:ATP phosphoribosyltransferase activity"/>
    <property type="evidence" value="ECO:0007669"/>
    <property type="project" value="UniProtKB-UniRule"/>
</dbReference>
<dbReference type="GO" id="GO:0000287">
    <property type="term" value="F:magnesium ion binding"/>
    <property type="evidence" value="ECO:0007669"/>
    <property type="project" value="UniProtKB-UniRule"/>
</dbReference>
<dbReference type="GO" id="GO:0000105">
    <property type="term" value="P:L-histidine biosynthetic process"/>
    <property type="evidence" value="ECO:0007669"/>
    <property type="project" value="UniProtKB-UniRule"/>
</dbReference>
<dbReference type="CDD" id="cd13592">
    <property type="entry name" value="PBP2_HisGL2"/>
    <property type="match status" value="1"/>
</dbReference>
<dbReference type="FunFam" id="3.30.70.120:FF:000002">
    <property type="entry name" value="ATP phosphoribosyltransferase"/>
    <property type="match status" value="1"/>
</dbReference>
<dbReference type="FunFam" id="3.40.190.10:FF:000008">
    <property type="entry name" value="ATP phosphoribosyltransferase"/>
    <property type="match status" value="1"/>
</dbReference>
<dbReference type="Gene3D" id="3.30.70.120">
    <property type="match status" value="1"/>
</dbReference>
<dbReference type="Gene3D" id="3.40.190.10">
    <property type="entry name" value="Periplasmic binding protein-like II"/>
    <property type="match status" value="2"/>
</dbReference>
<dbReference type="HAMAP" id="MF_00079">
    <property type="entry name" value="HisG_Long"/>
    <property type="match status" value="1"/>
</dbReference>
<dbReference type="InterPro" id="IPR020621">
    <property type="entry name" value="ATP-PRT_HisG_long"/>
</dbReference>
<dbReference type="InterPro" id="IPR013820">
    <property type="entry name" value="ATP_PRibTrfase_cat"/>
</dbReference>
<dbReference type="InterPro" id="IPR018198">
    <property type="entry name" value="ATP_PRibTrfase_CS"/>
</dbReference>
<dbReference type="InterPro" id="IPR001348">
    <property type="entry name" value="ATP_PRibTrfase_HisG"/>
</dbReference>
<dbReference type="InterPro" id="IPR013115">
    <property type="entry name" value="HisG_C"/>
</dbReference>
<dbReference type="InterPro" id="IPR011322">
    <property type="entry name" value="N-reg_PII-like_a/b"/>
</dbReference>
<dbReference type="InterPro" id="IPR015867">
    <property type="entry name" value="N-reg_PII/ATP_PRibTrfase_C"/>
</dbReference>
<dbReference type="NCBIfam" id="TIGR00070">
    <property type="entry name" value="hisG"/>
    <property type="match status" value="1"/>
</dbReference>
<dbReference type="NCBIfam" id="TIGR03455">
    <property type="entry name" value="HisG_C-term"/>
    <property type="match status" value="1"/>
</dbReference>
<dbReference type="PANTHER" id="PTHR21403:SF8">
    <property type="entry name" value="ATP PHOSPHORIBOSYLTRANSFERASE"/>
    <property type="match status" value="1"/>
</dbReference>
<dbReference type="PANTHER" id="PTHR21403">
    <property type="entry name" value="ATP PHOSPHORIBOSYLTRANSFERASE ATP-PRTASE"/>
    <property type="match status" value="1"/>
</dbReference>
<dbReference type="Pfam" id="PF01634">
    <property type="entry name" value="HisG"/>
    <property type="match status" value="1"/>
</dbReference>
<dbReference type="Pfam" id="PF08029">
    <property type="entry name" value="HisG_C"/>
    <property type="match status" value="1"/>
</dbReference>
<dbReference type="SUPFAM" id="SSF54913">
    <property type="entry name" value="GlnB-like"/>
    <property type="match status" value="1"/>
</dbReference>
<dbReference type="SUPFAM" id="SSF53850">
    <property type="entry name" value="Periplasmic binding protein-like II"/>
    <property type="match status" value="1"/>
</dbReference>
<dbReference type="PROSITE" id="PS01316">
    <property type="entry name" value="ATP_P_PHORIBOSYLTR"/>
    <property type="match status" value="1"/>
</dbReference>
<gene>
    <name evidence="1" type="primary">hisG</name>
    <name type="ordered locus">Spea_2456</name>
</gene>
<name>HIS1_SHEPA</name>
<proteinExistence type="inferred from homology"/>
<protein>
    <recommendedName>
        <fullName evidence="1">ATP phosphoribosyltransferase</fullName>
        <shortName evidence="1">ATP-PRT</shortName>
        <shortName evidence="1">ATP-PRTase</shortName>
        <ecNumber evidence="1">2.4.2.17</ecNumber>
    </recommendedName>
</protein>
<keyword id="KW-0028">Amino-acid biosynthesis</keyword>
<keyword id="KW-0067">ATP-binding</keyword>
<keyword id="KW-0963">Cytoplasm</keyword>
<keyword id="KW-0328">Glycosyltransferase</keyword>
<keyword id="KW-0368">Histidine biosynthesis</keyword>
<keyword id="KW-0460">Magnesium</keyword>
<keyword id="KW-0479">Metal-binding</keyword>
<keyword id="KW-0547">Nucleotide-binding</keyword>
<keyword id="KW-1185">Reference proteome</keyword>
<keyword id="KW-0808">Transferase</keyword>
<feature type="chain" id="PRO_1000075267" description="ATP phosphoribosyltransferase">
    <location>
        <begin position="1"/>
        <end position="299"/>
    </location>
</feature>